<organism>
    <name type="scientific">Pelagibacter ubique (strain HTCC1062)</name>
    <dbReference type="NCBI Taxonomy" id="335992"/>
    <lineage>
        <taxon>Bacteria</taxon>
        <taxon>Pseudomonadati</taxon>
        <taxon>Pseudomonadota</taxon>
        <taxon>Alphaproteobacteria</taxon>
        <taxon>Candidatus Pelagibacterales</taxon>
        <taxon>Candidatus Pelagibacteraceae</taxon>
        <taxon>Candidatus Pelagibacter</taxon>
    </lineage>
</organism>
<feature type="chain" id="PRO_0000371048" description="ATP synthase subunit delta">
    <location>
        <begin position="1"/>
        <end position="185"/>
    </location>
</feature>
<accession>Q4FP35</accession>
<sequence length="185" mass="20934">MSKNKGFSETSAGRYSLALYELAVEANNLNEIEVHSASIINLITSSEDFKSLIKDPTNNKEDQLNALSKISEQYKLNELLTKFLSFLISKRRFFYVDKILKSFVETCSVKRGELKAELTSAKDLTENEINNIKEELTKNFSSKIKLNYKHDASLIGGLIVQVGSTMVDTSIKNKLQQIENRMIEA</sequence>
<gene>
    <name evidence="1" type="primary">atpH</name>
    <name type="ordered locus">SAR11_0233</name>
</gene>
<reference key="1">
    <citation type="journal article" date="2005" name="Science">
        <title>Genome streamlining in a cosmopolitan oceanic bacterium.</title>
        <authorList>
            <person name="Giovannoni S.J."/>
            <person name="Tripp H.J."/>
            <person name="Givan S."/>
            <person name="Podar M."/>
            <person name="Vergin K.L."/>
            <person name="Baptista D."/>
            <person name="Bibbs L."/>
            <person name="Eads J."/>
            <person name="Richardson T.H."/>
            <person name="Noordewier M."/>
            <person name="Rappe M.S."/>
            <person name="Short J.M."/>
            <person name="Carrington J.C."/>
            <person name="Mathur E.J."/>
        </authorList>
    </citation>
    <scope>NUCLEOTIDE SEQUENCE [LARGE SCALE GENOMIC DNA]</scope>
    <source>
        <strain>HTCC1062</strain>
    </source>
</reference>
<proteinExistence type="inferred from homology"/>
<protein>
    <recommendedName>
        <fullName evidence="1">ATP synthase subunit delta</fullName>
    </recommendedName>
    <alternativeName>
        <fullName evidence="1">ATP synthase F(1) sector subunit delta</fullName>
    </alternativeName>
    <alternativeName>
        <fullName evidence="1">F-type ATPase subunit delta</fullName>
        <shortName evidence="1">F-ATPase subunit delta</shortName>
    </alternativeName>
</protein>
<name>ATPD_PELUB</name>
<comment type="function">
    <text evidence="1">F(1)F(0) ATP synthase produces ATP from ADP in the presence of a proton or sodium gradient. F-type ATPases consist of two structural domains, F(1) containing the extramembraneous catalytic core and F(0) containing the membrane proton channel, linked together by a central stalk and a peripheral stalk. During catalysis, ATP synthesis in the catalytic domain of F(1) is coupled via a rotary mechanism of the central stalk subunits to proton translocation.</text>
</comment>
<comment type="function">
    <text evidence="1">This protein is part of the stalk that links CF(0) to CF(1). It either transmits conformational changes from CF(0) to CF(1) or is implicated in proton conduction.</text>
</comment>
<comment type="subunit">
    <text evidence="1">F-type ATPases have 2 components, F(1) - the catalytic core - and F(0) - the membrane proton channel. F(1) has five subunits: alpha(3), beta(3), gamma(1), delta(1), epsilon(1). F(0) has three main subunits: a(1), b(2) and c(10-14). The alpha and beta chains form an alternating ring which encloses part of the gamma chain. F(1) is attached to F(0) by a central stalk formed by the gamma and epsilon chains, while a peripheral stalk is formed by the delta and b chains.</text>
</comment>
<comment type="subcellular location">
    <subcellularLocation>
        <location evidence="1">Cell inner membrane</location>
        <topology evidence="1">Peripheral membrane protein</topology>
    </subcellularLocation>
</comment>
<comment type="similarity">
    <text evidence="1">Belongs to the ATPase delta chain family.</text>
</comment>
<keyword id="KW-0066">ATP synthesis</keyword>
<keyword id="KW-0997">Cell inner membrane</keyword>
<keyword id="KW-1003">Cell membrane</keyword>
<keyword id="KW-0139">CF(1)</keyword>
<keyword id="KW-0375">Hydrogen ion transport</keyword>
<keyword id="KW-0406">Ion transport</keyword>
<keyword id="KW-0472">Membrane</keyword>
<keyword id="KW-1185">Reference proteome</keyword>
<keyword id="KW-0813">Transport</keyword>
<dbReference type="EMBL" id="CP000084">
    <property type="protein sequence ID" value="AAZ21054.1"/>
    <property type="molecule type" value="Genomic_DNA"/>
</dbReference>
<dbReference type="RefSeq" id="WP_011281556.1">
    <property type="nucleotide sequence ID" value="NC_007205.1"/>
</dbReference>
<dbReference type="SMR" id="Q4FP35"/>
<dbReference type="STRING" id="335992.SAR11_0233"/>
<dbReference type="GeneID" id="66294730"/>
<dbReference type="KEGG" id="pub:SAR11_0233"/>
<dbReference type="eggNOG" id="COG0712">
    <property type="taxonomic scope" value="Bacteria"/>
</dbReference>
<dbReference type="HOGENOM" id="CLU_085114_0_1_5"/>
<dbReference type="OrthoDB" id="9796185at2"/>
<dbReference type="Proteomes" id="UP000002528">
    <property type="component" value="Chromosome"/>
</dbReference>
<dbReference type="GO" id="GO:0005886">
    <property type="term" value="C:plasma membrane"/>
    <property type="evidence" value="ECO:0007669"/>
    <property type="project" value="UniProtKB-SubCell"/>
</dbReference>
<dbReference type="GO" id="GO:0045259">
    <property type="term" value="C:proton-transporting ATP synthase complex"/>
    <property type="evidence" value="ECO:0007669"/>
    <property type="project" value="UniProtKB-KW"/>
</dbReference>
<dbReference type="GO" id="GO:0046933">
    <property type="term" value="F:proton-transporting ATP synthase activity, rotational mechanism"/>
    <property type="evidence" value="ECO:0007669"/>
    <property type="project" value="UniProtKB-UniRule"/>
</dbReference>
<dbReference type="Gene3D" id="1.10.520.20">
    <property type="entry name" value="N-terminal domain of the delta subunit of the F1F0-ATP synthase"/>
    <property type="match status" value="1"/>
</dbReference>
<dbReference type="HAMAP" id="MF_01416">
    <property type="entry name" value="ATP_synth_delta_bact"/>
    <property type="match status" value="1"/>
</dbReference>
<dbReference type="InterPro" id="IPR026015">
    <property type="entry name" value="ATP_synth_OSCP/delta_N_sf"/>
</dbReference>
<dbReference type="InterPro" id="IPR000711">
    <property type="entry name" value="ATPase_OSCP/dsu"/>
</dbReference>
<dbReference type="NCBIfam" id="TIGR01145">
    <property type="entry name" value="ATP_synt_delta"/>
    <property type="match status" value="1"/>
</dbReference>
<dbReference type="PANTHER" id="PTHR11910">
    <property type="entry name" value="ATP SYNTHASE DELTA CHAIN"/>
    <property type="match status" value="1"/>
</dbReference>
<dbReference type="Pfam" id="PF00213">
    <property type="entry name" value="OSCP"/>
    <property type="match status" value="1"/>
</dbReference>
<dbReference type="PRINTS" id="PR00125">
    <property type="entry name" value="ATPASEDELTA"/>
</dbReference>
<dbReference type="SUPFAM" id="SSF47928">
    <property type="entry name" value="N-terminal domain of the delta subunit of the F1F0-ATP synthase"/>
    <property type="match status" value="1"/>
</dbReference>
<evidence type="ECO:0000255" key="1">
    <source>
        <dbReference type="HAMAP-Rule" id="MF_01416"/>
    </source>
</evidence>